<sequence length="306" mass="33619">MIFQRTVQKMVKATGVGLHSGNKVTLSIMPAPVNTGIVLVRTDLSPAVAIPAKAEQVRETTMCTALVNDEGIRISTIEHLFAALAGLGIDNAVIEVDAPEIPIMDGSASPFVFLLQSAGIKEQAAPKKYLKIKRPVRVEDGDKWAELKPFKGFRVNFKIDFAHPEIARSQQHVVMDFSTSAFVKEISRARTFGFMRDIEYLRANNLALGGSMENAVVLDEYRVLNPDGLRYEDEFVKHKILDAFGDLYVAGHAILGEFTAYKTGHALNNQLVRALLAQQDAWELVSFEKEADVPVSFSVPSGAVFA</sequence>
<proteinExistence type="inferred from homology"/>
<protein>
    <recommendedName>
        <fullName evidence="1">UDP-3-O-acyl-N-acetylglucosamine deacetylase</fullName>
        <shortName evidence="1">UDP-3-O-acyl-GlcNAc deacetylase</shortName>
        <ecNumber evidence="1">3.5.1.108</ecNumber>
    </recommendedName>
    <alternativeName>
        <fullName evidence="1">UDP-3-O-[R-3-hydroxymyristoyl]-N-acetylglucosamine deacetylase</fullName>
    </alternativeName>
</protein>
<name>LPXC_SHESW</name>
<gene>
    <name evidence="1" type="primary">lpxC</name>
    <name type="ordered locus">Sputw3181_0395</name>
</gene>
<feature type="chain" id="PRO_1000013235" description="UDP-3-O-acyl-N-acetylglucosamine deacetylase">
    <location>
        <begin position="1"/>
        <end position="306"/>
    </location>
</feature>
<feature type="active site" description="Proton donor" evidence="1">
    <location>
        <position position="265"/>
    </location>
</feature>
<feature type="binding site" evidence="1">
    <location>
        <position position="79"/>
    </location>
    <ligand>
        <name>Zn(2+)</name>
        <dbReference type="ChEBI" id="CHEBI:29105"/>
    </ligand>
</feature>
<feature type="binding site" evidence="1">
    <location>
        <position position="238"/>
    </location>
    <ligand>
        <name>Zn(2+)</name>
        <dbReference type="ChEBI" id="CHEBI:29105"/>
    </ligand>
</feature>
<feature type="binding site" evidence="1">
    <location>
        <position position="242"/>
    </location>
    <ligand>
        <name>Zn(2+)</name>
        <dbReference type="ChEBI" id="CHEBI:29105"/>
    </ligand>
</feature>
<keyword id="KW-0378">Hydrolase</keyword>
<keyword id="KW-0441">Lipid A biosynthesis</keyword>
<keyword id="KW-0444">Lipid biosynthesis</keyword>
<keyword id="KW-0443">Lipid metabolism</keyword>
<keyword id="KW-0479">Metal-binding</keyword>
<keyword id="KW-0862">Zinc</keyword>
<organism>
    <name type="scientific">Shewanella sp. (strain W3-18-1)</name>
    <dbReference type="NCBI Taxonomy" id="351745"/>
    <lineage>
        <taxon>Bacteria</taxon>
        <taxon>Pseudomonadati</taxon>
        <taxon>Pseudomonadota</taxon>
        <taxon>Gammaproteobacteria</taxon>
        <taxon>Alteromonadales</taxon>
        <taxon>Shewanellaceae</taxon>
        <taxon>Shewanella</taxon>
    </lineage>
</organism>
<evidence type="ECO:0000255" key="1">
    <source>
        <dbReference type="HAMAP-Rule" id="MF_00388"/>
    </source>
</evidence>
<comment type="function">
    <text evidence="1">Catalyzes the hydrolysis of UDP-3-O-myristoyl-N-acetylglucosamine to form UDP-3-O-myristoylglucosamine and acetate, the committed step in lipid A biosynthesis.</text>
</comment>
<comment type="catalytic activity">
    <reaction evidence="1">
        <text>a UDP-3-O-[(3R)-3-hydroxyacyl]-N-acetyl-alpha-D-glucosamine + H2O = a UDP-3-O-[(3R)-3-hydroxyacyl]-alpha-D-glucosamine + acetate</text>
        <dbReference type="Rhea" id="RHEA:67816"/>
        <dbReference type="ChEBI" id="CHEBI:15377"/>
        <dbReference type="ChEBI" id="CHEBI:30089"/>
        <dbReference type="ChEBI" id="CHEBI:137740"/>
        <dbReference type="ChEBI" id="CHEBI:173225"/>
        <dbReference type="EC" id="3.5.1.108"/>
    </reaction>
</comment>
<comment type="cofactor">
    <cofactor evidence="1">
        <name>Zn(2+)</name>
        <dbReference type="ChEBI" id="CHEBI:29105"/>
    </cofactor>
</comment>
<comment type="pathway">
    <text evidence="1">Glycolipid biosynthesis; lipid IV(A) biosynthesis; lipid IV(A) from (3R)-3-hydroxytetradecanoyl-[acyl-carrier-protein] and UDP-N-acetyl-alpha-D-glucosamine: step 2/6.</text>
</comment>
<comment type="similarity">
    <text evidence="1">Belongs to the LpxC family.</text>
</comment>
<reference key="1">
    <citation type="submission" date="2006-12" db="EMBL/GenBank/DDBJ databases">
        <title>Complete sequence of Shewanella sp. W3-18-1.</title>
        <authorList>
            <consortium name="US DOE Joint Genome Institute"/>
            <person name="Copeland A."/>
            <person name="Lucas S."/>
            <person name="Lapidus A."/>
            <person name="Barry K."/>
            <person name="Detter J.C."/>
            <person name="Glavina del Rio T."/>
            <person name="Hammon N."/>
            <person name="Israni S."/>
            <person name="Dalin E."/>
            <person name="Tice H."/>
            <person name="Pitluck S."/>
            <person name="Chain P."/>
            <person name="Malfatti S."/>
            <person name="Shin M."/>
            <person name="Vergez L."/>
            <person name="Schmutz J."/>
            <person name="Larimer F."/>
            <person name="Land M."/>
            <person name="Hauser L."/>
            <person name="Kyrpides N."/>
            <person name="Lykidis A."/>
            <person name="Tiedje J."/>
            <person name="Richardson P."/>
        </authorList>
    </citation>
    <scope>NUCLEOTIDE SEQUENCE [LARGE SCALE GENOMIC DNA]</scope>
    <source>
        <strain>W3-18-1</strain>
    </source>
</reference>
<accession>A1RF01</accession>
<dbReference type="EC" id="3.5.1.108" evidence="1"/>
<dbReference type="EMBL" id="CP000503">
    <property type="protein sequence ID" value="ABM23246.1"/>
    <property type="molecule type" value="Genomic_DNA"/>
</dbReference>
<dbReference type="RefSeq" id="WP_011787788.1">
    <property type="nucleotide sequence ID" value="NC_008750.1"/>
</dbReference>
<dbReference type="SMR" id="A1RF01"/>
<dbReference type="GeneID" id="67441951"/>
<dbReference type="KEGG" id="shw:Sputw3181_0395"/>
<dbReference type="HOGENOM" id="CLU_046528_1_0_6"/>
<dbReference type="UniPathway" id="UPA00359">
    <property type="reaction ID" value="UER00478"/>
</dbReference>
<dbReference type="Proteomes" id="UP000002597">
    <property type="component" value="Chromosome"/>
</dbReference>
<dbReference type="GO" id="GO:0016020">
    <property type="term" value="C:membrane"/>
    <property type="evidence" value="ECO:0007669"/>
    <property type="project" value="GOC"/>
</dbReference>
<dbReference type="GO" id="GO:0046872">
    <property type="term" value="F:metal ion binding"/>
    <property type="evidence" value="ECO:0007669"/>
    <property type="project" value="UniProtKB-KW"/>
</dbReference>
<dbReference type="GO" id="GO:0103117">
    <property type="term" value="F:UDP-3-O-acyl-N-acetylglucosamine deacetylase activity"/>
    <property type="evidence" value="ECO:0007669"/>
    <property type="project" value="UniProtKB-UniRule"/>
</dbReference>
<dbReference type="GO" id="GO:0009245">
    <property type="term" value="P:lipid A biosynthetic process"/>
    <property type="evidence" value="ECO:0007669"/>
    <property type="project" value="UniProtKB-UniRule"/>
</dbReference>
<dbReference type="Gene3D" id="3.30.230.20">
    <property type="entry name" value="lpxc deacetylase, domain 1"/>
    <property type="match status" value="1"/>
</dbReference>
<dbReference type="Gene3D" id="3.30.1700.10">
    <property type="entry name" value="lpxc deacetylase, domain 2"/>
    <property type="match status" value="1"/>
</dbReference>
<dbReference type="HAMAP" id="MF_00388">
    <property type="entry name" value="LpxC"/>
    <property type="match status" value="1"/>
</dbReference>
<dbReference type="InterPro" id="IPR020568">
    <property type="entry name" value="Ribosomal_Su5_D2-typ_SF"/>
</dbReference>
<dbReference type="InterPro" id="IPR004463">
    <property type="entry name" value="UDP-acyl_GlcNac_deAcase"/>
</dbReference>
<dbReference type="InterPro" id="IPR011334">
    <property type="entry name" value="UDP-acyl_GlcNac_deAcase_C"/>
</dbReference>
<dbReference type="InterPro" id="IPR015870">
    <property type="entry name" value="UDP-acyl_N-AcGlcN_deAcase_N"/>
</dbReference>
<dbReference type="NCBIfam" id="TIGR00325">
    <property type="entry name" value="lpxC"/>
    <property type="match status" value="1"/>
</dbReference>
<dbReference type="PANTHER" id="PTHR33694">
    <property type="entry name" value="UDP-3-O-ACYL-N-ACETYLGLUCOSAMINE DEACETYLASE 1, MITOCHONDRIAL-RELATED"/>
    <property type="match status" value="1"/>
</dbReference>
<dbReference type="PANTHER" id="PTHR33694:SF1">
    <property type="entry name" value="UDP-3-O-ACYL-N-ACETYLGLUCOSAMINE DEACETYLASE 1, MITOCHONDRIAL-RELATED"/>
    <property type="match status" value="1"/>
</dbReference>
<dbReference type="Pfam" id="PF03331">
    <property type="entry name" value="LpxC"/>
    <property type="match status" value="1"/>
</dbReference>
<dbReference type="SUPFAM" id="SSF54211">
    <property type="entry name" value="Ribosomal protein S5 domain 2-like"/>
    <property type="match status" value="2"/>
</dbReference>